<sequence>MAFLLHQARFYTTVNHLRDLPPTVQPEIAFAGRSNAGKSTAINVLCNQKRLAFASKTPGRTQHINYFSVGPAAEPVANLVDLPGYGYAEVPGAAKAHWEMLLSSYLATRSQLCGLILMMDSRRPLTDLDRRMIEWFAPTGKPIHTLLTKCDKLTRQESINALRNTQKGLDAYRDQGVKGKLTVQLFSALKRTGLDEAHELIESWLRPSVADAEGAPVAQ</sequence>
<accession>A4JAS1</accession>
<comment type="function">
    <text evidence="1">Necessary for normal cell division and for the maintenance of normal septation.</text>
</comment>
<comment type="cofactor">
    <cofactor evidence="1">
        <name>Mg(2+)</name>
        <dbReference type="ChEBI" id="CHEBI:18420"/>
    </cofactor>
</comment>
<comment type="similarity">
    <text evidence="1">Belongs to the TRAFAC class TrmE-Era-EngA-EngB-Septin-like GTPase superfamily. EngB GTPase family.</text>
</comment>
<reference key="1">
    <citation type="submission" date="2007-03" db="EMBL/GenBank/DDBJ databases">
        <title>Complete sequence of chromosome 1 of Burkholderia vietnamiensis G4.</title>
        <authorList>
            <consortium name="US DOE Joint Genome Institute"/>
            <person name="Copeland A."/>
            <person name="Lucas S."/>
            <person name="Lapidus A."/>
            <person name="Barry K."/>
            <person name="Detter J.C."/>
            <person name="Glavina del Rio T."/>
            <person name="Hammon N."/>
            <person name="Israni S."/>
            <person name="Dalin E."/>
            <person name="Tice H."/>
            <person name="Pitluck S."/>
            <person name="Chain P."/>
            <person name="Malfatti S."/>
            <person name="Shin M."/>
            <person name="Vergez L."/>
            <person name="Schmutz J."/>
            <person name="Larimer F."/>
            <person name="Land M."/>
            <person name="Hauser L."/>
            <person name="Kyrpides N."/>
            <person name="Tiedje J."/>
            <person name="Richardson P."/>
        </authorList>
    </citation>
    <scope>NUCLEOTIDE SEQUENCE [LARGE SCALE GENOMIC DNA]</scope>
    <source>
        <strain>G4 / LMG 22486</strain>
    </source>
</reference>
<gene>
    <name evidence="1" type="primary">engB</name>
    <name type="ordered locus">Bcep1808_0361</name>
</gene>
<proteinExistence type="inferred from homology"/>
<protein>
    <recommendedName>
        <fullName evidence="1">Probable GTP-binding protein EngB</fullName>
    </recommendedName>
</protein>
<keyword id="KW-0131">Cell cycle</keyword>
<keyword id="KW-0132">Cell division</keyword>
<keyword id="KW-0342">GTP-binding</keyword>
<keyword id="KW-0460">Magnesium</keyword>
<keyword id="KW-0479">Metal-binding</keyword>
<keyword id="KW-0547">Nucleotide-binding</keyword>
<keyword id="KW-0717">Septation</keyword>
<dbReference type="EMBL" id="CP000614">
    <property type="protein sequence ID" value="ABO53374.1"/>
    <property type="molecule type" value="Genomic_DNA"/>
</dbReference>
<dbReference type="SMR" id="A4JAS1"/>
<dbReference type="KEGG" id="bvi:Bcep1808_0361"/>
<dbReference type="eggNOG" id="COG0218">
    <property type="taxonomic scope" value="Bacteria"/>
</dbReference>
<dbReference type="HOGENOM" id="CLU_033732_1_1_4"/>
<dbReference type="Proteomes" id="UP000002287">
    <property type="component" value="Chromosome 1"/>
</dbReference>
<dbReference type="GO" id="GO:0005829">
    <property type="term" value="C:cytosol"/>
    <property type="evidence" value="ECO:0007669"/>
    <property type="project" value="TreeGrafter"/>
</dbReference>
<dbReference type="GO" id="GO:0005525">
    <property type="term" value="F:GTP binding"/>
    <property type="evidence" value="ECO:0007669"/>
    <property type="project" value="UniProtKB-UniRule"/>
</dbReference>
<dbReference type="GO" id="GO:0046872">
    <property type="term" value="F:metal ion binding"/>
    <property type="evidence" value="ECO:0007669"/>
    <property type="project" value="UniProtKB-KW"/>
</dbReference>
<dbReference type="GO" id="GO:0000917">
    <property type="term" value="P:division septum assembly"/>
    <property type="evidence" value="ECO:0007669"/>
    <property type="project" value="UniProtKB-KW"/>
</dbReference>
<dbReference type="CDD" id="cd01876">
    <property type="entry name" value="YihA_EngB"/>
    <property type="match status" value="1"/>
</dbReference>
<dbReference type="FunFam" id="3.40.50.300:FF:000098">
    <property type="entry name" value="Probable GTP-binding protein EngB"/>
    <property type="match status" value="1"/>
</dbReference>
<dbReference type="Gene3D" id="3.40.50.300">
    <property type="entry name" value="P-loop containing nucleotide triphosphate hydrolases"/>
    <property type="match status" value="1"/>
</dbReference>
<dbReference type="HAMAP" id="MF_00321">
    <property type="entry name" value="GTPase_EngB"/>
    <property type="match status" value="1"/>
</dbReference>
<dbReference type="InterPro" id="IPR030393">
    <property type="entry name" value="G_ENGB_dom"/>
</dbReference>
<dbReference type="InterPro" id="IPR006073">
    <property type="entry name" value="GTP-bd"/>
</dbReference>
<dbReference type="InterPro" id="IPR019987">
    <property type="entry name" value="GTP-bd_ribosome_bio_YsxC"/>
</dbReference>
<dbReference type="InterPro" id="IPR027417">
    <property type="entry name" value="P-loop_NTPase"/>
</dbReference>
<dbReference type="NCBIfam" id="TIGR03598">
    <property type="entry name" value="GTPase_YsxC"/>
    <property type="match status" value="1"/>
</dbReference>
<dbReference type="PANTHER" id="PTHR11649:SF13">
    <property type="entry name" value="ENGB-TYPE G DOMAIN-CONTAINING PROTEIN"/>
    <property type="match status" value="1"/>
</dbReference>
<dbReference type="PANTHER" id="PTHR11649">
    <property type="entry name" value="MSS1/TRME-RELATED GTP-BINDING PROTEIN"/>
    <property type="match status" value="1"/>
</dbReference>
<dbReference type="Pfam" id="PF01926">
    <property type="entry name" value="MMR_HSR1"/>
    <property type="match status" value="1"/>
</dbReference>
<dbReference type="SUPFAM" id="SSF52540">
    <property type="entry name" value="P-loop containing nucleoside triphosphate hydrolases"/>
    <property type="match status" value="1"/>
</dbReference>
<dbReference type="PROSITE" id="PS51706">
    <property type="entry name" value="G_ENGB"/>
    <property type="match status" value="1"/>
</dbReference>
<name>ENGB_BURVG</name>
<feature type="chain" id="PRO_1000005805" description="Probable GTP-binding protein EngB">
    <location>
        <begin position="1"/>
        <end position="219"/>
    </location>
</feature>
<feature type="domain" description="EngB-type G" evidence="1">
    <location>
        <begin position="24"/>
        <end position="207"/>
    </location>
</feature>
<feature type="binding site" evidence="1">
    <location>
        <begin position="32"/>
        <end position="39"/>
    </location>
    <ligand>
        <name>GTP</name>
        <dbReference type="ChEBI" id="CHEBI:37565"/>
    </ligand>
</feature>
<feature type="binding site" evidence="1">
    <location>
        <position position="39"/>
    </location>
    <ligand>
        <name>Mg(2+)</name>
        <dbReference type="ChEBI" id="CHEBI:18420"/>
    </ligand>
</feature>
<feature type="binding site" evidence="1">
    <location>
        <begin position="59"/>
        <end position="63"/>
    </location>
    <ligand>
        <name>GTP</name>
        <dbReference type="ChEBI" id="CHEBI:37565"/>
    </ligand>
</feature>
<feature type="binding site" evidence="1">
    <location>
        <position position="61"/>
    </location>
    <ligand>
        <name>Mg(2+)</name>
        <dbReference type="ChEBI" id="CHEBI:18420"/>
    </ligand>
</feature>
<feature type="binding site" evidence="1">
    <location>
        <begin position="81"/>
        <end position="84"/>
    </location>
    <ligand>
        <name>GTP</name>
        <dbReference type="ChEBI" id="CHEBI:37565"/>
    </ligand>
</feature>
<feature type="binding site" evidence="1">
    <location>
        <begin position="148"/>
        <end position="151"/>
    </location>
    <ligand>
        <name>GTP</name>
        <dbReference type="ChEBI" id="CHEBI:37565"/>
    </ligand>
</feature>
<feature type="binding site" evidence="1">
    <location>
        <begin position="186"/>
        <end position="188"/>
    </location>
    <ligand>
        <name>GTP</name>
        <dbReference type="ChEBI" id="CHEBI:37565"/>
    </ligand>
</feature>
<organism>
    <name type="scientific">Burkholderia vietnamiensis (strain G4 / LMG 22486)</name>
    <name type="common">Burkholderia cepacia (strain R1808)</name>
    <dbReference type="NCBI Taxonomy" id="269482"/>
    <lineage>
        <taxon>Bacteria</taxon>
        <taxon>Pseudomonadati</taxon>
        <taxon>Pseudomonadota</taxon>
        <taxon>Betaproteobacteria</taxon>
        <taxon>Burkholderiales</taxon>
        <taxon>Burkholderiaceae</taxon>
        <taxon>Burkholderia</taxon>
        <taxon>Burkholderia cepacia complex</taxon>
    </lineage>
</organism>
<evidence type="ECO:0000255" key="1">
    <source>
        <dbReference type="HAMAP-Rule" id="MF_00321"/>
    </source>
</evidence>